<name>PTHP_LACLC</name>
<evidence type="ECO:0000250" key="1"/>
<evidence type="ECO:0000255" key="2">
    <source>
        <dbReference type="PROSITE-ProRule" id="PRU00681"/>
    </source>
</evidence>
<evidence type="ECO:0000305" key="3"/>
<gene>
    <name type="primary">ptsH</name>
</gene>
<organism>
    <name type="scientific">Lactococcus lactis subsp. cremoris</name>
    <name type="common">Streptococcus cremoris</name>
    <dbReference type="NCBI Taxonomy" id="1359"/>
    <lineage>
        <taxon>Bacteria</taxon>
        <taxon>Bacillati</taxon>
        <taxon>Bacillota</taxon>
        <taxon>Bacilli</taxon>
        <taxon>Lactobacillales</taxon>
        <taxon>Streptococcaceae</taxon>
        <taxon>Lactococcus</taxon>
    </lineage>
</organism>
<sequence>MASKEFHIVAETGIHARPATLLVQTASKFTSEITLEYKGKSVNLKSIMGVMSLGVGQGADVTISAEGADADDAIATIAETMTKEGLAE</sequence>
<dbReference type="EMBL" id="Z97203">
    <property type="protein sequence ID" value="CAB10076.1"/>
    <property type="molecule type" value="Genomic_DNA"/>
</dbReference>
<dbReference type="RefSeq" id="WP_011834224.1">
    <property type="nucleotide sequence ID" value="NZ_WJUX01000018.1"/>
</dbReference>
<dbReference type="SMR" id="Q9ZAD9"/>
<dbReference type="OMA" id="AEVWVTR"/>
<dbReference type="OrthoDB" id="9809047at2"/>
<dbReference type="GO" id="GO:0005737">
    <property type="term" value="C:cytoplasm"/>
    <property type="evidence" value="ECO:0007669"/>
    <property type="project" value="UniProtKB-SubCell"/>
</dbReference>
<dbReference type="GO" id="GO:0009401">
    <property type="term" value="P:phosphoenolpyruvate-dependent sugar phosphotransferase system"/>
    <property type="evidence" value="ECO:0007669"/>
    <property type="project" value="UniProtKB-KW"/>
</dbReference>
<dbReference type="CDD" id="cd00367">
    <property type="entry name" value="PTS-HPr_like"/>
    <property type="match status" value="1"/>
</dbReference>
<dbReference type="Gene3D" id="3.30.1340.10">
    <property type="entry name" value="HPr-like"/>
    <property type="match status" value="1"/>
</dbReference>
<dbReference type="InterPro" id="IPR050399">
    <property type="entry name" value="HPr"/>
</dbReference>
<dbReference type="InterPro" id="IPR000032">
    <property type="entry name" value="HPr-like"/>
</dbReference>
<dbReference type="InterPro" id="IPR035895">
    <property type="entry name" value="HPr-like_sf"/>
</dbReference>
<dbReference type="InterPro" id="IPR001020">
    <property type="entry name" value="PTS_HPr_His_P_site"/>
</dbReference>
<dbReference type="InterPro" id="IPR002114">
    <property type="entry name" value="PTS_HPr_Ser_P_site"/>
</dbReference>
<dbReference type="NCBIfam" id="NF010352">
    <property type="entry name" value="PRK13780.1"/>
    <property type="match status" value="1"/>
</dbReference>
<dbReference type="NCBIfam" id="TIGR01003">
    <property type="entry name" value="PTS_HPr_family"/>
    <property type="match status" value="1"/>
</dbReference>
<dbReference type="PANTHER" id="PTHR33705">
    <property type="entry name" value="PHOSPHOCARRIER PROTEIN HPR"/>
    <property type="match status" value="1"/>
</dbReference>
<dbReference type="PANTHER" id="PTHR33705:SF2">
    <property type="entry name" value="PHOSPHOCARRIER PROTEIN NPR"/>
    <property type="match status" value="1"/>
</dbReference>
<dbReference type="Pfam" id="PF00381">
    <property type="entry name" value="PTS-HPr"/>
    <property type="match status" value="1"/>
</dbReference>
<dbReference type="PRINTS" id="PR00107">
    <property type="entry name" value="PHOSPHOCPHPR"/>
</dbReference>
<dbReference type="SUPFAM" id="SSF55594">
    <property type="entry name" value="HPr-like"/>
    <property type="match status" value="1"/>
</dbReference>
<dbReference type="PROSITE" id="PS51350">
    <property type="entry name" value="PTS_HPR_DOM"/>
    <property type="match status" value="1"/>
</dbReference>
<dbReference type="PROSITE" id="PS00369">
    <property type="entry name" value="PTS_HPR_HIS"/>
    <property type="match status" value="1"/>
</dbReference>
<dbReference type="PROSITE" id="PS00589">
    <property type="entry name" value="PTS_HPR_SER"/>
    <property type="match status" value="1"/>
</dbReference>
<comment type="function">
    <text evidence="1">General (non sugar-specific) component of the phosphoenolpyruvate-dependent sugar phosphotransferase system (sugar PTS). This major carbohydrate active-transport system catalyzes the phosphorylation of incoming sugar substrates concomitantly with their translocation across the cell membrane. The phosphoryl group from phosphoenolpyruvate (PEP) is transferred to the phosphoryl carrier protein HPr by enzyme I. Phospho-HPr then transfers it to the PTS EIIA domain.</text>
</comment>
<comment type="function">
    <text evidence="1">P-Ser-HPr interacts with the catabolite control protein A (CcpA), forming a complex that binds to DNA at the catabolite response elements cre, operator sites preceding a large number of catabolite-regulated genes. Thus, P-Ser-HPr is a corepressor in carbon catabolite repression (CCR), a mechanism that allows bacteria to coordinate and optimize the utilization of available carbon sources. P-Ser-HPr also plays a role in inducer exclusion, in which it probably interacts with several non-PTS permeases and inhibits their transport activity (By similarity).</text>
</comment>
<comment type="activity regulation">
    <text evidence="1">Phosphorylation on Ser-46 inhibits the phosphoryl transfer from enzyme I to HPr.</text>
</comment>
<comment type="subcellular location">
    <subcellularLocation>
        <location evidence="1">Cytoplasm</location>
    </subcellularLocation>
</comment>
<comment type="similarity">
    <text evidence="3">Belongs to the HPr family.</text>
</comment>
<keyword id="KW-0963">Cytoplasm</keyword>
<keyword id="KW-0597">Phosphoprotein</keyword>
<keyword id="KW-0598">Phosphotransferase system</keyword>
<keyword id="KW-0762">Sugar transport</keyword>
<keyword id="KW-0804">Transcription</keyword>
<keyword id="KW-0805">Transcription regulation</keyword>
<keyword id="KW-0813">Transport</keyword>
<accession>Q9ZAD9</accession>
<protein>
    <recommendedName>
        <fullName>Phosphocarrier protein HPr</fullName>
    </recommendedName>
    <alternativeName>
        <fullName>Histidine-containing protein</fullName>
    </alternativeName>
</protein>
<feature type="chain" id="PRO_0000107858" description="Phosphocarrier protein HPr">
    <location>
        <begin position="1"/>
        <end position="88"/>
    </location>
</feature>
<feature type="domain" description="HPr" evidence="2">
    <location>
        <begin position="1"/>
        <end position="88"/>
    </location>
</feature>
<feature type="active site" description="Pros-phosphohistidine intermediate" evidence="2">
    <location>
        <position position="15"/>
    </location>
</feature>
<feature type="modified residue" description="Phosphoserine; by HPrK/P" evidence="2">
    <location>
        <position position="46"/>
    </location>
</feature>
<proteinExistence type="inferred from homology"/>
<reference key="1">
    <citation type="journal article" date="1999" name="J. Bacteriol.">
        <title>Molecular characterization of the Lactococcus lactis ptsHI operon and analysis of the regulatory role of HPr.</title>
        <authorList>
            <person name="Luesink E.J."/>
            <person name="Beumer C.M.A."/>
            <person name="Kuipers O.P."/>
            <person name="de Vos W.M."/>
        </authorList>
    </citation>
    <scope>NUCLEOTIDE SEQUENCE [GENOMIC DNA]</scope>
</reference>